<feature type="chain" id="PRO_1000148801" description="Undecaprenyl-diphosphatase">
    <location>
        <begin position="1"/>
        <end position="295"/>
    </location>
</feature>
<feature type="transmembrane region" description="Helical" evidence="1">
    <location>
        <begin position="39"/>
        <end position="59"/>
    </location>
</feature>
<feature type="transmembrane region" description="Helical" evidence="1">
    <location>
        <begin position="97"/>
        <end position="117"/>
    </location>
</feature>
<feature type="transmembrane region" description="Helical" evidence="1">
    <location>
        <begin position="121"/>
        <end position="141"/>
    </location>
</feature>
<feature type="transmembrane region" description="Helical" evidence="1">
    <location>
        <begin position="198"/>
        <end position="218"/>
    </location>
</feature>
<feature type="transmembrane region" description="Helical" evidence="1">
    <location>
        <begin position="232"/>
        <end position="252"/>
    </location>
</feature>
<feature type="transmembrane region" description="Helical" evidence="1">
    <location>
        <begin position="263"/>
        <end position="283"/>
    </location>
</feature>
<protein>
    <recommendedName>
        <fullName evidence="1">Undecaprenyl-diphosphatase</fullName>
        <ecNumber evidence="1">3.6.1.27</ecNumber>
    </recommendedName>
    <alternativeName>
        <fullName evidence="1">Bacitracin resistance protein</fullName>
    </alternativeName>
    <alternativeName>
        <fullName evidence="1">Undecaprenyl pyrophosphate phosphatase</fullName>
    </alternativeName>
</protein>
<accession>B8DUF9</accession>
<keyword id="KW-0046">Antibiotic resistance</keyword>
<keyword id="KW-1003">Cell membrane</keyword>
<keyword id="KW-0133">Cell shape</keyword>
<keyword id="KW-0961">Cell wall biogenesis/degradation</keyword>
<keyword id="KW-0378">Hydrolase</keyword>
<keyword id="KW-0472">Membrane</keyword>
<keyword id="KW-0573">Peptidoglycan synthesis</keyword>
<keyword id="KW-1185">Reference proteome</keyword>
<keyword id="KW-0812">Transmembrane</keyword>
<keyword id="KW-1133">Transmembrane helix</keyword>
<comment type="function">
    <text evidence="1">Catalyzes the dephosphorylation of undecaprenyl diphosphate (UPP). Confers resistance to bacitracin.</text>
</comment>
<comment type="catalytic activity">
    <reaction evidence="1">
        <text>di-trans,octa-cis-undecaprenyl diphosphate + H2O = di-trans,octa-cis-undecaprenyl phosphate + phosphate + H(+)</text>
        <dbReference type="Rhea" id="RHEA:28094"/>
        <dbReference type="ChEBI" id="CHEBI:15377"/>
        <dbReference type="ChEBI" id="CHEBI:15378"/>
        <dbReference type="ChEBI" id="CHEBI:43474"/>
        <dbReference type="ChEBI" id="CHEBI:58405"/>
        <dbReference type="ChEBI" id="CHEBI:60392"/>
        <dbReference type="EC" id="3.6.1.27"/>
    </reaction>
</comment>
<comment type="subcellular location">
    <subcellularLocation>
        <location evidence="1">Cell membrane</location>
        <topology evidence="1">Multi-pass membrane protein</topology>
    </subcellularLocation>
</comment>
<comment type="miscellaneous">
    <text>Bacitracin is thought to be involved in the inhibition of peptidoglycan synthesis by sequestering undecaprenyl diphosphate, thereby reducing the pool of lipid carrier available.</text>
</comment>
<comment type="similarity">
    <text evidence="1">Belongs to the UppP family.</text>
</comment>
<evidence type="ECO:0000255" key="1">
    <source>
        <dbReference type="HAMAP-Rule" id="MF_01006"/>
    </source>
</evidence>
<name>UPPP_BIFA0</name>
<reference key="1">
    <citation type="journal article" date="2009" name="J. Bacteriol.">
        <title>Genome sequence of the probiotic bacterium Bifidobacterium animalis subsp. lactis AD011.</title>
        <authorList>
            <person name="Kim J.F."/>
            <person name="Jeong H."/>
            <person name="Yu D.S."/>
            <person name="Choi S.-H."/>
            <person name="Hur C.-G."/>
            <person name="Park M.-S."/>
            <person name="Yoon S.H."/>
            <person name="Kim D.-W."/>
            <person name="Ji G.E."/>
            <person name="Park H.-S."/>
            <person name="Oh T.K."/>
        </authorList>
    </citation>
    <scope>NUCLEOTIDE SEQUENCE [LARGE SCALE GENOMIC DNA]</scope>
    <source>
        <strain>AD011</strain>
    </source>
</reference>
<dbReference type="EC" id="3.6.1.27" evidence="1"/>
<dbReference type="EMBL" id="CP001213">
    <property type="protein sequence ID" value="ACL29638.1"/>
    <property type="molecule type" value="Genomic_DNA"/>
</dbReference>
<dbReference type="RefSeq" id="WP_004217939.1">
    <property type="nucleotide sequence ID" value="NC_011835.1"/>
</dbReference>
<dbReference type="SMR" id="B8DUF9"/>
<dbReference type="STRING" id="442563.BLA_1353"/>
<dbReference type="KEGG" id="bla:BLA_1353"/>
<dbReference type="PATRIC" id="fig|442563.4.peg.1416"/>
<dbReference type="HOGENOM" id="CLU_060296_1_0_11"/>
<dbReference type="Proteomes" id="UP000002456">
    <property type="component" value="Chromosome"/>
</dbReference>
<dbReference type="GO" id="GO:0005886">
    <property type="term" value="C:plasma membrane"/>
    <property type="evidence" value="ECO:0007669"/>
    <property type="project" value="UniProtKB-SubCell"/>
</dbReference>
<dbReference type="GO" id="GO:0050380">
    <property type="term" value="F:undecaprenyl-diphosphatase activity"/>
    <property type="evidence" value="ECO:0007669"/>
    <property type="project" value="UniProtKB-UniRule"/>
</dbReference>
<dbReference type="GO" id="GO:0071555">
    <property type="term" value="P:cell wall organization"/>
    <property type="evidence" value="ECO:0007669"/>
    <property type="project" value="UniProtKB-KW"/>
</dbReference>
<dbReference type="GO" id="GO:0009252">
    <property type="term" value="P:peptidoglycan biosynthetic process"/>
    <property type="evidence" value="ECO:0007669"/>
    <property type="project" value="UniProtKB-KW"/>
</dbReference>
<dbReference type="GO" id="GO:0008360">
    <property type="term" value="P:regulation of cell shape"/>
    <property type="evidence" value="ECO:0007669"/>
    <property type="project" value="UniProtKB-KW"/>
</dbReference>
<dbReference type="GO" id="GO:0046677">
    <property type="term" value="P:response to antibiotic"/>
    <property type="evidence" value="ECO:0007669"/>
    <property type="project" value="UniProtKB-UniRule"/>
</dbReference>
<dbReference type="HAMAP" id="MF_01006">
    <property type="entry name" value="Undec_diphosphatase"/>
    <property type="match status" value="1"/>
</dbReference>
<dbReference type="InterPro" id="IPR003824">
    <property type="entry name" value="UppP"/>
</dbReference>
<dbReference type="NCBIfam" id="NF001392">
    <property type="entry name" value="PRK00281.2-1"/>
    <property type="match status" value="1"/>
</dbReference>
<dbReference type="NCBIfam" id="TIGR00753">
    <property type="entry name" value="undec_PP_bacA"/>
    <property type="match status" value="1"/>
</dbReference>
<dbReference type="PANTHER" id="PTHR30622">
    <property type="entry name" value="UNDECAPRENYL-DIPHOSPHATASE"/>
    <property type="match status" value="1"/>
</dbReference>
<dbReference type="PANTHER" id="PTHR30622:SF4">
    <property type="entry name" value="UNDECAPRENYL-DIPHOSPHATASE"/>
    <property type="match status" value="1"/>
</dbReference>
<dbReference type="Pfam" id="PF02673">
    <property type="entry name" value="BacA"/>
    <property type="match status" value="1"/>
</dbReference>
<proteinExistence type="inferred from homology"/>
<organism>
    <name type="scientific">Bifidobacterium animalis subsp. lactis (strain AD011)</name>
    <dbReference type="NCBI Taxonomy" id="442563"/>
    <lineage>
        <taxon>Bacteria</taxon>
        <taxon>Bacillati</taxon>
        <taxon>Actinomycetota</taxon>
        <taxon>Actinomycetes</taxon>
        <taxon>Bifidobacteriales</taxon>
        <taxon>Bifidobacteriaceae</taxon>
        <taxon>Bifidobacterium</taxon>
    </lineage>
</organism>
<gene>
    <name evidence="1" type="primary">uppP</name>
    <name type="ordered locus">BLA_1353</name>
</gene>
<sequence>MNFFQAIFLGLVQALTEYLPVSSSAHVRIVGDLMLGGDPGAAFTAIIQIGTELAVLLYFRRDIWNILKSWCLCLAGKEGKDRASRFGAHNKDARLGWYIIIATIPILIAGVLFQHAIETTLRNLWITVAMLFIFGVILWIVDDRARQVKTLDDMNTKDAIWFGIGQMLALIPGVSRSGGTITFGRAMGYKREAAVRAAFLMAIPAVFGAGILEAVKAIKDVNADAMFPGWGATIAATVVAFVVGYIVIIGFLKFVSTYSYKAFAIYRIALAIIVAILLLCGVLSPLEGIPVSGNA</sequence>